<sequence length="285" mass="31564">MKDYVGAHMSIAGGIHNAPERGVKAGCGVIQLFTQNTNQWRGKLISDPDILLFKEKLAESGLNEVISHDIYLINLASAPGEIRDKSLNGFQEEMIRCSRLGIGKIVMHPGSHNGDGEEVGLRRIIEAFDYLIAETPAYSGKILLETTAGQGTNLGYTFEHLRTIIEGSAHPDRFGVCYDTCHTFAAGYDITSAAAYGQVWEEFDRIIGLDRLQCFHFNDSKKGLNCRIDRHEHIGKGAIGATAFSLIMNDPRFAGIPKILETPKGDNNEMDEINLKLLRDMVKQR</sequence>
<evidence type="ECO:0000255" key="1">
    <source>
        <dbReference type="HAMAP-Rule" id="MF_00152"/>
    </source>
</evidence>
<reference key="1">
    <citation type="submission" date="2009-01" db="EMBL/GenBank/DDBJ databases">
        <title>Complete sequence of Geobacter sp. FRC-32.</title>
        <authorList>
            <consortium name="US DOE Joint Genome Institute"/>
            <person name="Lucas S."/>
            <person name="Copeland A."/>
            <person name="Lapidus A."/>
            <person name="Glavina del Rio T."/>
            <person name="Dalin E."/>
            <person name="Tice H."/>
            <person name="Bruce D."/>
            <person name="Goodwin L."/>
            <person name="Pitluck S."/>
            <person name="Saunders E."/>
            <person name="Brettin T."/>
            <person name="Detter J.C."/>
            <person name="Han C."/>
            <person name="Larimer F."/>
            <person name="Land M."/>
            <person name="Hauser L."/>
            <person name="Kyrpides N."/>
            <person name="Ovchinnikova G."/>
            <person name="Kostka J."/>
            <person name="Richardson P."/>
        </authorList>
    </citation>
    <scope>NUCLEOTIDE SEQUENCE [LARGE SCALE GENOMIC DNA]</scope>
    <source>
        <strain>DSM 22248 / JCM 15807 / FRC-32</strain>
    </source>
</reference>
<accession>B9M4N1</accession>
<proteinExistence type="inferred from homology"/>
<keyword id="KW-0227">DNA damage</keyword>
<keyword id="KW-0234">DNA repair</keyword>
<keyword id="KW-0255">Endonuclease</keyword>
<keyword id="KW-0378">Hydrolase</keyword>
<keyword id="KW-0479">Metal-binding</keyword>
<keyword id="KW-0540">Nuclease</keyword>
<keyword id="KW-1185">Reference proteome</keyword>
<keyword id="KW-0862">Zinc</keyword>
<feature type="chain" id="PRO_1000123328" description="Probable endonuclease 4">
    <location>
        <begin position="1"/>
        <end position="285"/>
    </location>
</feature>
<feature type="binding site" evidence="1">
    <location>
        <position position="68"/>
    </location>
    <ligand>
        <name>Zn(2+)</name>
        <dbReference type="ChEBI" id="CHEBI:29105"/>
        <label>1</label>
    </ligand>
</feature>
<feature type="binding site" evidence="1">
    <location>
        <position position="108"/>
    </location>
    <ligand>
        <name>Zn(2+)</name>
        <dbReference type="ChEBI" id="CHEBI:29105"/>
        <label>1</label>
    </ligand>
</feature>
<feature type="binding site" evidence="1">
    <location>
        <position position="145"/>
    </location>
    <ligand>
        <name>Zn(2+)</name>
        <dbReference type="ChEBI" id="CHEBI:29105"/>
        <label>1</label>
    </ligand>
</feature>
<feature type="binding site" evidence="1">
    <location>
        <position position="145"/>
    </location>
    <ligand>
        <name>Zn(2+)</name>
        <dbReference type="ChEBI" id="CHEBI:29105"/>
        <label>2</label>
    </ligand>
</feature>
<feature type="binding site" evidence="1">
    <location>
        <position position="179"/>
    </location>
    <ligand>
        <name>Zn(2+)</name>
        <dbReference type="ChEBI" id="CHEBI:29105"/>
        <label>2</label>
    </ligand>
</feature>
<feature type="binding site" evidence="1">
    <location>
        <position position="182"/>
    </location>
    <ligand>
        <name>Zn(2+)</name>
        <dbReference type="ChEBI" id="CHEBI:29105"/>
        <label>3</label>
    </ligand>
</feature>
<feature type="binding site" evidence="1">
    <location>
        <position position="216"/>
    </location>
    <ligand>
        <name>Zn(2+)</name>
        <dbReference type="ChEBI" id="CHEBI:29105"/>
        <label>2</label>
    </ligand>
</feature>
<feature type="binding site" evidence="1">
    <location>
        <position position="229"/>
    </location>
    <ligand>
        <name>Zn(2+)</name>
        <dbReference type="ChEBI" id="CHEBI:29105"/>
        <label>3</label>
    </ligand>
</feature>
<feature type="binding site" evidence="1">
    <location>
        <position position="231"/>
    </location>
    <ligand>
        <name>Zn(2+)</name>
        <dbReference type="ChEBI" id="CHEBI:29105"/>
        <label>3</label>
    </ligand>
</feature>
<feature type="binding site" evidence="1">
    <location>
        <position position="261"/>
    </location>
    <ligand>
        <name>Zn(2+)</name>
        <dbReference type="ChEBI" id="CHEBI:29105"/>
        <label>2</label>
    </ligand>
</feature>
<name>END4_GEODF</name>
<comment type="function">
    <text evidence="1">Endonuclease IV plays a role in DNA repair. It cleaves phosphodiester bonds at apurinic or apyrimidinic (AP) sites, generating a 3'-hydroxyl group and a 5'-terminal sugar phosphate.</text>
</comment>
<comment type="catalytic activity">
    <reaction evidence="1">
        <text>Endonucleolytic cleavage to 5'-phosphooligonucleotide end-products.</text>
        <dbReference type="EC" id="3.1.21.2"/>
    </reaction>
</comment>
<comment type="cofactor">
    <cofactor evidence="1">
        <name>Zn(2+)</name>
        <dbReference type="ChEBI" id="CHEBI:29105"/>
    </cofactor>
    <text evidence="1">Binds 3 Zn(2+) ions.</text>
</comment>
<comment type="similarity">
    <text evidence="1">Belongs to the AP endonuclease 2 family.</text>
</comment>
<dbReference type="EC" id="3.1.21.2" evidence="1"/>
<dbReference type="EMBL" id="CP001390">
    <property type="protein sequence ID" value="ACM19757.1"/>
    <property type="molecule type" value="Genomic_DNA"/>
</dbReference>
<dbReference type="RefSeq" id="WP_012646486.1">
    <property type="nucleotide sequence ID" value="NC_011979.1"/>
</dbReference>
<dbReference type="SMR" id="B9M4N1"/>
<dbReference type="STRING" id="316067.Geob_1397"/>
<dbReference type="KEGG" id="geo:Geob_1397"/>
<dbReference type="eggNOG" id="COG0648">
    <property type="taxonomic scope" value="Bacteria"/>
</dbReference>
<dbReference type="HOGENOM" id="CLU_025885_0_1_7"/>
<dbReference type="OrthoDB" id="9805666at2"/>
<dbReference type="Proteomes" id="UP000007721">
    <property type="component" value="Chromosome"/>
</dbReference>
<dbReference type="GO" id="GO:0008833">
    <property type="term" value="F:deoxyribonuclease IV (phage-T4-induced) activity"/>
    <property type="evidence" value="ECO:0007669"/>
    <property type="project" value="UniProtKB-UniRule"/>
</dbReference>
<dbReference type="GO" id="GO:0003677">
    <property type="term" value="F:DNA binding"/>
    <property type="evidence" value="ECO:0007669"/>
    <property type="project" value="InterPro"/>
</dbReference>
<dbReference type="GO" id="GO:0003906">
    <property type="term" value="F:DNA-(apurinic or apyrimidinic site) endonuclease activity"/>
    <property type="evidence" value="ECO:0007669"/>
    <property type="project" value="TreeGrafter"/>
</dbReference>
<dbReference type="GO" id="GO:0008081">
    <property type="term" value="F:phosphoric diester hydrolase activity"/>
    <property type="evidence" value="ECO:0007669"/>
    <property type="project" value="TreeGrafter"/>
</dbReference>
<dbReference type="GO" id="GO:0008270">
    <property type="term" value="F:zinc ion binding"/>
    <property type="evidence" value="ECO:0007669"/>
    <property type="project" value="UniProtKB-UniRule"/>
</dbReference>
<dbReference type="GO" id="GO:0006284">
    <property type="term" value="P:base-excision repair"/>
    <property type="evidence" value="ECO:0007669"/>
    <property type="project" value="TreeGrafter"/>
</dbReference>
<dbReference type="CDD" id="cd00019">
    <property type="entry name" value="AP2Ec"/>
    <property type="match status" value="1"/>
</dbReference>
<dbReference type="FunFam" id="3.20.20.150:FF:000001">
    <property type="entry name" value="Probable endonuclease 4"/>
    <property type="match status" value="1"/>
</dbReference>
<dbReference type="Gene3D" id="3.20.20.150">
    <property type="entry name" value="Divalent-metal-dependent TIM barrel enzymes"/>
    <property type="match status" value="1"/>
</dbReference>
<dbReference type="HAMAP" id="MF_00152">
    <property type="entry name" value="Nfo"/>
    <property type="match status" value="1"/>
</dbReference>
<dbReference type="InterPro" id="IPR001719">
    <property type="entry name" value="AP_endonuc_2"/>
</dbReference>
<dbReference type="InterPro" id="IPR018246">
    <property type="entry name" value="AP_endonuc_F2_Zn_BS"/>
</dbReference>
<dbReference type="InterPro" id="IPR036237">
    <property type="entry name" value="Xyl_isomerase-like_sf"/>
</dbReference>
<dbReference type="InterPro" id="IPR013022">
    <property type="entry name" value="Xyl_isomerase-like_TIM-brl"/>
</dbReference>
<dbReference type="NCBIfam" id="TIGR00587">
    <property type="entry name" value="nfo"/>
    <property type="match status" value="1"/>
</dbReference>
<dbReference type="PANTHER" id="PTHR21445:SF0">
    <property type="entry name" value="APURINIC-APYRIMIDINIC ENDONUCLEASE"/>
    <property type="match status" value="1"/>
</dbReference>
<dbReference type="PANTHER" id="PTHR21445">
    <property type="entry name" value="ENDONUCLEASE IV ENDODEOXYRIBONUCLEASE IV"/>
    <property type="match status" value="1"/>
</dbReference>
<dbReference type="Pfam" id="PF01261">
    <property type="entry name" value="AP_endonuc_2"/>
    <property type="match status" value="1"/>
</dbReference>
<dbReference type="SMART" id="SM00518">
    <property type="entry name" value="AP2Ec"/>
    <property type="match status" value="1"/>
</dbReference>
<dbReference type="SUPFAM" id="SSF51658">
    <property type="entry name" value="Xylose isomerase-like"/>
    <property type="match status" value="1"/>
</dbReference>
<dbReference type="PROSITE" id="PS00729">
    <property type="entry name" value="AP_NUCLEASE_F2_1"/>
    <property type="match status" value="1"/>
</dbReference>
<dbReference type="PROSITE" id="PS00730">
    <property type="entry name" value="AP_NUCLEASE_F2_2"/>
    <property type="match status" value="1"/>
</dbReference>
<dbReference type="PROSITE" id="PS00731">
    <property type="entry name" value="AP_NUCLEASE_F2_3"/>
    <property type="match status" value="1"/>
</dbReference>
<dbReference type="PROSITE" id="PS51432">
    <property type="entry name" value="AP_NUCLEASE_F2_4"/>
    <property type="match status" value="1"/>
</dbReference>
<organism>
    <name type="scientific">Geotalea daltonii (strain DSM 22248 / JCM 15807 / FRC-32)</name>
    <name type="common">Geobacter daltonii</name>
    <dbReference type="NCBI Taxonomy" id="316067"/>
    <lineage>
        <taxon>Bacteria</taxon>
        <taxon>Pseudomonadati</taxon>
        <taxon>Thermodesulfobacteriota</taxon>
        <taxon>Desulfuromonadia</taxon>
        <taxon>Geobacterales</taxon>
        <taxon>Geobacteraceae</taxon>
        <taxon>Geotalea</taxon>
    </lineage>
</organism>
<protein>
    <recommendedName>
        <fullName evidence="1">Probable endonuclease 4</fullName>
        <ecNumber evidence="1">3.1.21.2</ecNumber>
    </recommendedName>
    <alternativeName>
        <fullName evidence="1">Endodeoxyribonuclease IV</fullName>
    </alternativeName>
    <alternativeName>
        <fullName evidence="1">Endonuclease IV</fullName>
    </alternativeName>
</protein>
<gene>
    <name evidence="1" type="primary">nfo</name>
    <name type="ordered locus">Geob_1397</name>
</gene>